<dbReference type="EC" id="5.3.1.12"/>
<dbReference type="EMBL" id="AE005674">
    <property type="protein sequence ID" value="AAN44604.2"/>
    <property type="molecule type" value="Genomic_DNA"/>
</dbReference>
<dbReference type="EMBL" id="AE014073">
    <property type="protein sequence ID" value="AAP18417.1"/>
    <property type="molecule type" value="Genomic_DNA"/>
</dbReference>
<dbReference type="RefSeq" id="NP_708897.2">
    <property type="nucleotide sequence ID" value="NC_004337.2"/>
</dbReference>
<dbReference type="RefSeq" id="WP_000187442.1">
    <property type="nucleotide sequence ID" value="NZ_WPGW01000031.1"/>
</dbReference>
<dbReference type="SMR" id="P0A8G5"/>
<dbReference type="STRING" id="198214.SF3132"/>
<dbReference type="PaxDb" id="198214-SF3132"/>
<dbReference type="GeneID" id="1027178"/>
<dbReference type="GeneID" id="93778895"/>
<dbReference type="KEGG" id="sfl:SF3132"/>
<dbReference type="KEGG" id="sfx:S3339"/>
<dbReference type="PATRIC" id="fig|198214.7.peg.3719"/>
<dbReference type="HOGENOM" id="CLU_044465_1_0_6"/>
<dbReference type="UniPathway" id="UPA00246"/>
<dbReference type="Proteomes" id="UP000001006">
    <property type="component" value="Chromosome"/>
</dbReference>
<dbReference type="Proteomes" id="UP000002673">
    <property type="component" value="Chromosome"/>
</dbReference>
<dbReference type="GO" id="GO:0008880">
    <property type="term" value="F:glucuronate isomerase activity"/>
    <property type="evidence" value="ECO:0007669"/>
    <property type="project" value="UniProtKB-UniRule"/>
</dbReference>
<dbReference type="GO" id="GO:0019698">
    <property type="term" value="P:D-galacturonate catabolic process"/>
    <property type="evidence" value="ECO:0007669"/>
    <property type="project" value="TreeGrafter"/>
</dbReference>
<dbReference type="GO" id="GO:0042840">
    <property type="term" value="P:D-glucuronate catabolic process"/>
    <property type="evidence" value="ECO:0007669"/>
    <property type="project" value="TreeGrafter"/>
</dbReference>
<dbReference type="FunFam" id="1.10.2020.10:FF:000001">
    <property type="entry name" value="Uronate isomerase"/>
    <property type="match status" value="1"/>
</dbReference>
<dbReference type="Gene3D" id="3.20.20.140">
    <property type="entry name" value="Metal-dependent hydrolases"/>
    <property type="match status" value="1"/>
</dbReference>
<dbReference type="Gene3D" id="1.10.2020.10">
    <property type="entry name" value="uronate isomerase, domain 2, chain A"/>
    <property type="match status" value="1"/>
</dbReference>
<dbReference type="HAMAP" id="MF_00675">
    <property type="entry name" value="UxaC"/>
    <property type="match status" value="1"/>
</dbReference>
<dbReference type="InterPro" id="IPR032466">
    <property type="entry name" value="Metal_Hydrolase"/>
</dbReference>
<dbReference type="InterPro" id="IPR003766">
    <property type="entry name" value="Uronate_isomerase"/>
</dbReference>
<dbReference type="NCBIfam" id="NF002794">
    <property type="entry name" value="PRK02925.1"/>
    <property type="match status" value="1"/>
</dbReference>
<dbReference type="PANTHER" id="PTHR30068">
    <property type="entry name" value="URONATE ISOMERASE"/>
    <property type="match status" value="1"/>
</dbReference>
<dbReference type="PANTHER" id="PTHR30068:SF4">
    <property type="entry name" value="URONATE ISOMERASE"/>
    <property type="match status" value="1"/>
</dbReference>
<dbReference type="Pfam" id="PF02614">
    <property type="entry name" value="UxaC"/>
    <property type="match status" value="1"/>
</dbReference>
<dbReference type="SUPFAM" id="SSF51556">
    <property type="entry name" value="Metallo-dependent hydrolases"/>
    <property type="match status" value="1"/>
</dbReference>
<sequence>MTPFMTEDFLLDTEFARRLYHDYAKDQPIFDYHCHLPPQQIAEDYRFKNLYDIWLKGDHYKWRAMRTNGVAERLCTGDASDREKFDAWAATVPHTIGNPLYHWTHLELRRPFGITGKLLSPSTADEIWNECNELLAQDNFSARGIMQQMNVKMVGTTDDPIDSLEHHAEIAKDGSFTIKVLPSWRPDKAFNIEQATFNDYMAKLGEVSDTDIRRFADLQTALTKRLDHFAAHGCKVSDHALDVVMFAEANEAELDSILARRLAGETLSEHEVAQFKTAVLVFLGAEYARRGWVQQYHIGALRNNNLRQFKLLGPDVGFDSINDRPMAEELSKLLSKQNEENLLPKTILYCLNPRDNEVLGTMIGNFQGEGMPGKMQFGSGWWFNDQKDGMERQMTQLAQLGLLSRFVGMLTDSRSFLSYTRHEYFRRILCQMIGRWVEAGEAPADINLLGEMVKNICFNNARDYFAIELN</sequence>
<protein>
    <recommendedName>
        <fullName>Uronate isomerase</fullName>
        <ecNumber>5.3.1.12</ecNumber>
    </recommendedName>
    <alternativeName>
        <fullName>Glucuronate isomerase</fullName>
    </alternativeName>
    <alternativeName>
        <fullName>Uronic isomerase</fullName>
    </alternativeName>
</protein>
<comment type="catalytic activity">
    <reaction>
        <text>D-glucuronate = D-fructuronate</text>
        <dbReference type="Rhea" id="RHEA:13049"/>
        <dbReference type="ChEBI" id="CHEBI:58720"/>
        <dbReference type="ChEBI" id="CHEBI:59863"/>
        <dbReference type="EC" id="5.3.1.12"/>
    </reaction>
</comment>
<comment type="catalytic activity">
    <reaction>
        <text>aldehydo-D-galacturonate = keto-D-tagaturonate</text>
        <dbReference type="Rhea" id="RHEA:27702"/>
        <dbReference type="ChEBI" id="CHEBI:12952"/>
        <dbReference type="ChEBI" id="CHEBI:17886"/>
        <dbReference type="EC" id="5.3.1.12"/>
    </reaction>
</comment>
<comment type="pathway">
    <text>Carbohydrate metabolism; pentose and glucuronate interconversion.</text>
</comment>
<comment type="similarity">
    <text evidence="1">Belongs to the metallo-dependent hydrolases superfamily. Uronate isomerase family.</text>
</comment>
<name>UXAC_SHIFL</name>
<keyword id="KW-0413">Isomerase</keyword>
<keyword id="KW-1185">Reference proteome</keyword>
<feature type="chain" id="PRO_0000172786" description="Uronate isomerase">
    <location>
        <begin position="1"/>
        <end position="470"/>
    </location>
</feature>
<reference key="1">
    <citation type="journal article" date="2002" name="Nucleic Acids Res.">
        <title>Genome sequence of Shigella flexneri 2a: insights into pathogenicity through comparison with genomes of Escherichia coli K12 and O157.</title>
        <authorList>
            <person name="Jin Q."/>
            <person name="Yuan Z."/>
            <person name="Xu J."/>
            <person name="Wang Y."/>
            <person name="Shen Y."/>
            <person name="Lu W."/>
            <person name="Wang J."/>
            <person name="Liu H."/>
            <person name="Yang J."/>
            <person name="Yang F."/>
            <person name="Zhang X."/>
            <person name="Zhang J."/>
            <person name="Yang G."/>
            <person name="Wu H."/>
            <person name="Qu D."/>
            <person name="Dong J."/>
            <person name="Sun L."/>
            <person name="Xue Y."/>
            <person name="Zhao A."/>
            <person name="Gao Y."/>
            <person name="Zhu J."/>
            <person name="Kan B."/>
            <person name="Ding K."/>
            <person name="Chen S."/>
            <person name="Cheng H."/>
            <person name="Yao Z."/>
            <person name="He B."/>
            <person name="Chen R."/>
            <person name="Ma D."/>
            <person name="Qiang B."/>
            <person name="Wen Y."/>
            <person name="Hou Y."/>
            <person name="Yu J."/>
        </authorList>
    </citation>
    <scope>NUCLEOTIDE SEQUENCE [LARGE SCALE GENOMIC DNA]</scope>
    <source>
        <strain>301 / Serotype 2a</strain>
    </source>
</reference>
<reference key="2">
    <citation type="journal article" date="2003" name="Infect. Immun.">
        <title>Complete genome sequence and comparative genomics of Shigella flexneri serotype 2a strain 2457T.</title>
        <authorList>
            <person name="Wei J."/>
            <person name="Goldberg M.B."/>
            <person name="Burland V."/>
            <person name="Venkatesan M.M."/>
            <person name="Deng W."/>
            <person name="Fournier G."/>
            <person name="Mayhew G.F."/>
            <person name="Plunkett G. III"/>
            <person name="Rose D.J."/>
            <person name="Darling A."/>
            <person name="Mau B."/>
            <person name="Perna N.T."/>
            <person name="Payne S.M."/>
            <person name="Runyen-Janecky L.J."/>
            <person name="Zhou S."/>
            <person name="Schwartz D.C."/>
            <person name="Blattner F.R."/>
        </authorList>
    </citation>
    <scope>NUCLEOTIDE SEQUENCE [LARGE SCALE GENOMIC DNA]</scope>
    <source>
        <strain>ATCC 700930 / 2457T / Serotype 2a</strain>
    </source>
</reference>
<proteinExistence type="inferred from homology"/>
<organism>
    <name type="scientific">Shigella flexneri</name>
    <dbReference type="NCBI Taxonomy" id="623"/>
    <lineage>
        <taxon>Bacteria</taxon>
        <taxon>Pseudomonadati</taxon>
        <taxon>Pseudomonadota</taxon>
        <taxon>Gammaproteobacteria</taxon>
        <taxon>Enterobacterales</taxon>
        <taxon>Enterobacteriaceae</taxon>
        <taxon>Shigella</taxon>
    </lineage>
</organism>
<accession>P0A8G5</accession>
<accession>P42605</accession>
<accession>P42606</accession>
<accession>P42607</accession>
<accession>P76662</accession>
<accession>P76663</accession>
<accession>P76664</accession>
<evidence type="ECO:0000305" key="1"/>
<gene>
    <name type="primary">uxaC</name>
    <name type="ordered locus">SF3132</name>
    <name type="ordered locus">S3339</name>
</gene>